<comment type="function">
    <text evidence="1">Involved in the gluconeogenesis. Catalyzes stereospecifically the conversion of dihydroxyacetone phosphate (DHAP) to D-glyceraldehyde-3-phosphate (G3P).</text>
</comment>
<comment type="catalytic activity">
    <reaction evidence="1">
        <text>D-glyceraldehyde 3-phosphate = dihydroxyacetone phosphate</text>
        <dbReference type="Rhea" id="RHEA:18585"/>
        <dbReference type="ChEBI" id="CHEBI:57642"/>
        <dbReference type="ChEBI" id="CHEBI:59776"/>
        <dbReference type="EC" id="5.3.1.1"/>
    </reaction>
</comment>
<comment type="pathway">
    <text evidence="1">Carbohydrate biosynthesis; gluconeogenesis.</text>
</comment>
<comment type="pathway">
    <text evidence="1">Carbohydrate degradation; glycolysis; D-glyceraldehyde 3-phosphate from glycerone phosphate: step 1/1.</text>
</comment>
<comment type="subunit">
    <text evidence="1">Homodimer.</text>
</comment>
<comment type="subcellular location">
    <subcellularLocation>
        <location evidence="1">Cytoplasm</location>
    </subcellularLocation>
</comment>
<comment type="similarity">
    <text evidence="1">Belongs to the triosephosphate isomerase family.</text>
</comment>
<proteinExistence type="inferred from homology"/>
<sequence>MRRPMVAGNWKMHGTRASVAELIEGLVKQALPGSVDIAVMPASLFTSRVIEGLQGTSIIVGAQDAAIQAEQGALTGEIASSQLADAGCKLVLVGHSERRQLIGEQDEVLNKKFAAIQASGLTPVLCIGETLEERKAGQTLEVVGRQLDSVIAEFGIGALVNAVIAYEPVWAIGTGLTASPQEAQEVHAAIRAQLAKENAEVAQGVRLLYGGSVKAANAVELFSMPDIDGGLIGGASLNADEFGAICRAAGN</sequence>
<organism>
    <name type="scientific">Pseudomonas syringae pv. tomato (strain ATCC BAA-871 / DC3000)</name>
    <dbReference type="NCBI Taxonomy" id="223283"/>
    <lineage>
        <taxon>Bacteria</taxon>
        <taxon>Pseudomonadati</taxon>
        <taxon>Pseudomonadota</taxon>
        <taxon>Gammaproteobacteria</taxon>
        <taxon>Pseudomonadales</taxon>
        <taxon>Pseudomonadaceae</taxon>
        <taxon>Pseudomonas</taxon>
    </lineage>
</organism>
<evidence type="ECO:0000255" key="1">
    <source>
        <dbReference type="HAMAP-Rule" id="MF_00147"/>
    </source>
</evidence>
<dbReference type="EC" id="5.3.1.1" evidence="1"/>
<dbReference type="EMBL" id="AE016853">
    <property type="protein sequence ID" value="AAO57942.1"/>
    <property type="molecule type" value="Genomic_DNA"/>
</dbReference>
<dbReference type="RefSeq" id="NP_794247.1">
    <property type="nucleotide sequence ID" value="NC_004578.1"/>
</dbReference>
<dbReference type="RefSeq" id="WP_005739097.1">
    <property type="nucleotide sequence ID" value="NC_004578.1"/>
</dbReference>
<dbReference type="SMR" id="Q87WQ1"/>
<dbReference type="STRING" id="223283.PSPTO_4494"/>
<dbReference type="GeneID" id="61789772"/>
<dbReference type="KEGG" id="pst:PSPTO_4494"/>
<dbReference type="PATRIC" id="fig|223283.9.peg.4610"/>
<dbReference type="eggNOG" id="COG0149">
    <property type="taxonomic scope" value="Bacteria"/>
</dbReference>
<dbReference type="HOGENOM" id="CLU_024251_2_1_6"/>
<dbReference type="OrthoDB" id="9809429at2"/>
<dbReference type="PhylomeDB" id="Q87WQ1"/>
<dbReference type="UniPathway" id="UPA00109">
    <property type="reaction ID" value="UER00189"/>
</dbReference>
<dbReference type="UniPathway" id="UPA00138"/>
<dbReference type="Proteomes" id="UP000002515">
    <property type="component" value="Chromosome"/>
</dbReference>
<dbReference type="GO" id="GO:0005829">
    <property type="term" value="C:cytosol"/>
    <property type="evidence" value="ECO:0007669"/>
    <property type="project" value="TreeGrafter"/>
</dbReference>
<dbReference type="GO" id="GO:0004807">
    <property type="term" value="F:triose-phosphate isomerase activity"/>
    <property type="evidence" value="ECO:0007669"/>
    <property type="project" value="UniProtKB-UniRule"/>
</dbReference>
<dbReference type="GO" id="GO:0006094">
    <property type="term" value="P:gluconeogenesis"/>
    <property type="evidence" value="ECO:0007669"/>
    <property type="project" value="UniProtKB-UniRule"/>
</dbReference>
<dbReference type="GO" id="GO:0046166">
    <property type="term" value="P:glyceraldehyde-3-phosphate biosynthetic process"/>
    <property type="evidence" value="ECO:0007669"/>
    <property type="project" value="TreeGrafter"/>
</dbReference>
<dbReference type="GO" id="GO:0019563">
    <property type="term" value="P:glycerol catabolic process"/>
    <property type="evidence" value="ECO:0007669"/>
    <property type="project" value="TreeGrafter"/>
</dbReference>
<dbReference type="GO" id="GO:0006096">
    <property type="term" value="P:glycolytic process"/>
    <property type="evidence" value="ECO:0007669"/>
    <property type="project" value="UniProtKB-UniRule"/>
</dbReference>
<dbReference type="CDD" id="cd00311">
    <property type="entry name" value="TIM"/>
    <property type="match status" value="1"/>
</dbReference>
<dbReference type="FunFam" id="3.20.20.70:FF:000016">
    <property type="entry name" value="Triosephosphate isomerase"/>
    <property type="match status" value="1"/>
</dbReference>
<dbReference type="Gene3D" id="3.20.20.70">
    <property type="entry name" value="Aldolase class I"/>
    <property type="match status" value="1"/>
</dbReference>
<dbReference type="HAMAP" id="MF_00147_B">
    <property type="entry name" value="TIM_B"/>
    <property type="match status" value="1"/>
</dbReference>
<dbReference type="InterPro" id="IPR013785">
    <property type="entry name" value="Aldolase_TIM"/>
</dbReference>
<dbReference type="InterPro" id="IPR035990">
    <property type="entry name" value="TIM_sf"/>
</dbReference>
<dbReference type="InterPro" id="IPR022896">
    <property type="entry name" value="TrioseP_Isoase_bac/euk"/>
</dbReference>
<dbReference type="InterPro" id="IPR000652">
    <property type="entry name" value="Triosephosphate_isomerase"/>
</dbReference>
<dbReference type="InterPro" id="IPR020861">
    <property type="entry name" value="Triosephosphate_isomerase_AS"/>
</dbReference>
<dbReference type="NCBIfam" id="TIGR00419">
    <property type="entry name" value="tim"/>
    <property type="match status" value="1"/>
</dbReference>
<dbReference type="PANTHER" id="PTHR21139">
    <property type="entry name" value="TRIOSEPHOSPHATE ISOMERASE"/>
    <property type="match status" value="1"/>
</dbReference>
<dbReference type="PANTHER" id="PTHR21139:SF42">
    <property type="entry name" value="TRIOSEPHOSPHATE ISOMERASE"/>
    <property type="match status" value="1"/>
</dbReference>
<dbReference type="Pfam" id="PF00121">
    <property type="entry name" value="TIM"/>
    <property type="match status" value="1"/>
</dbReference>
<dbReference type="SUPFAM" id="SSF51351">
    <property type="entry name" value="Triosephosphate isomerase (TIM)"/>
    <property type="match status" value="1"/>
</dbReference>
<dbReference type="PROSITE" id="PS00171">
    <property type="entry name" value="TIM_1"/>
    <property type="match status" value="1"/>
</dbReference>
<dbReference type="PROSITE" id="PS51440">
    <property type="entry name" value="TIM_2"/>
    <property type="match status" value="1"/>
</dbReference>
<gene>
    <name evidence="1" type="primary">tpiA</name>
    <name type="ordered locus">PSPTO_4494</name>
</gene>
<protein>
    <recommendedName>
        <fullName evidence="1">Triosephosphate isomerase</fullName>
        <shortName evidence="1">TIM</shortName>
        <shortName evidence="1">TPI</shortName>
        <ecNumber evidence="1">5.3.1.1</ecNumber>
    </recommendedName>
    <alternativeName>
        <fullName evidence="1">Triose-phosphate isomerase</fullName>
    </alternativeName>
</protein>
<reference key="1">
    <citation type="journal article" date="2003" name="Proc. Natl. Acad. Sci. U.S.A.">
        <title>The complete genome sequence of the Arabidopsis and tomato pathogen Pseudomonas syringae pv. tomato DC3000.</title>
        <authorList>
            <person name="Buell C.R."/>
            <person name="Joardar V."/>
            <person name="Lindeberg M."/>
            <person name="Selengut J."/>
            <person name="Paulsen I.T."/>
            <person name="Gwinn M.L."/>
            <person name="Dodson R.J."/>
            <person name="DeBoy R.T."/>
            <person name="Durkin A.S."/>
            <person name="Kolonay J.F."/>
            <person name="Madupu R."/>
            <person name="Daugherty S.C."/>
            <person name="Brinkac L.M."/>
            <person name="Beanan M.J."/>
            <person name="Haft D.H."/>
            <person name="Nelson W.C."/>
            <person name="Davidsen T.M."/>
            <person name="Zafar N."/>
            <person name="Zhou L."/>
            <person name="Liu J."/>
            <person name="Yuan Q."/>
            <person name="Khouri H.M."/>
            <person name="Fedorova N.B."/>
            <person name="Tran B."/>
            <person name="Russell D."/>
            <person name="Berry K.J."/>
            <person name="Utterback T.R."/>
            <person name="Van Aken S.E."/>
            <person name="Feldblyum T.V."/>
            <person name="D'Ascenzo M."/>
            <person name="Deng W.-L."/>
            <person name="Ramos A.R."/>
            <person name="Alfano J.R."/>
            <person name="Cartinhour S."/>
            <person name="Chatterjee A.K."/>
            <person name="Delaney T.P."/>
            <person name="Lazarowitz S.G."/>
            <person name="Martin G.B."/>
            <person name="Schneider D.J."/>
            <person name="Tang X."/>
            <person name="Bender C.L."/>
            <person name="White O."/>
            <person name="Fraser C.M."/>
            <person name="Collmer A."/>
        </authorList>
    </citation>
    <scope>NUCLEOTIDE SEQUENCE [LARGE SCALE GENOMIC DNA]</scope>
    <source>
        <strain>ATCC BAA-871 / DC3000</strain>
    </source>
</reference>
<keyword id="KW-0963">Cytoplasm</keyword>
<keyword id="KW-0312">Gluconeogenesis</keyword>
<keyword id="KW-0324">Glycolysis</keyword>
<keyword id="KW-0413">Isomerase</keyword>
<keyword id="KW-1185">Reference proteome</keyword>
<name>TPIS_PSESM</name>
<accession>Q87WQ1</accession>
<feature type="chain" id="PRO_0000090270" description="Triosephosphate isomerase">
    <location>
        <begin position="1"/>
        <end position="251"/>
    </location>
</feature>
<feature type="active site" description="Electrophile" evidence="1">
    <location>
        <position position="95"/>
    </location>
</feature>
<feature type="active site" description="Proton acceptor" evidence="1">
    <location>
        <position position="167"/>
    </location>
</feature>
<feature type="binding site" evidence="1">
    <location>
        <begin position="9"/>
        <end position="11"/>
    </location>
    <ligand>
        <name>substrate</name>
    </ligand>
</feature>
<feature type="binding site" evidence="1">
    <location>
        <position position="173"/>
    </location>
    <ligand>
        <name>substrate</name>
    </ligand>
</feature>
<feature type="binding site" evidence="1">
    <location>
        <position position="212"/>
    </location>
    <ligand>
        <name>substrate</name>
    </ligand>
</feature>
<feature type="binding site" evidence="1">
    <location>
        <begin position="233"/>
        <end position="234"/>
    </location>
    <ligand>
        <name>substrate</name>
    </ligand>
</feature>